<name>XYLS1_PSEPU</name>
<geneLocation type="plasmid">
    <name>TOL pWW53</name>
</geneLocation>
<feature type="chain" id="PRO_0000194602" description="XylDLEGF operon transcriptional activator 1">
    <location>
        <begin position="1"/>
        <end position="321"/>
    </location>
</feature>
<feature type="domain" description="HTH araC/xylS-type" evidence="1">
    <location>
        <begin position="214"/>
        <end position="315"/>
    </location>
</feature>
<feature type="DNA-binding region" description="H-T-H motif" evidence="1">
    <location>
        <begin position="231"/>
        <end position="252"/>
    </location>
</feature>
<feature type="DNA-binding region" description="H-T-H motif" evidence="1">
    <location>
        <begin position="282"/>
        <end position="305"/>
    </location>
</feature>
<evidence type="ECO:0000255" key="1">
    <source>
        <dbReference type="PROSITE-ProRule" id="PRU00593"/>
    </source>
</evidence>
<keyword id="KW-0010">Activator</keyword>
<keyword id="KW-0058">Aromatic hydrocarbons catabolism</keyword>
<keyword id="KW-0963">Cytoplasm</keyword>
<keyword id="KW-0238">DNA-binding</keyword>
<keyword id="KW-0614">Plasmid</keyword>
<keyword id="KW-0804">Transcription</keyword>
<keyword id="KW-0805">Transcription regulation</keyword>
<dbReference type="EMBL" id="L02356">
    <property type="protein sequence ID" value="AAA70302.1"/>
    <property type="molecule type" value="Genomic_DNA"/>
</dbReference>
<dbReference type="PIR" id="A47695">
    <property type="entry name" value="A47695"/>
</dbReference>
<dbReference type="RefSeq" id="YP_709330.1">
    <property type="nucleotide sequence ID" value="NC_008275.1"/>
</dbReference>
<dbReference type="SMR" id="Q04710"/>
<dbReference type="GO" id="GO:0005737">
    <property type="term" value="C:cytoplasm"/>
    <property type="evidence" value="ECO:0007669"/>
    <property type="project" value="UniProtKB-SubCell"/>
</dbReference>
<dbReference type="GO" id="GO:0003700">
    <property type="term" value="F:DNA-binding transcription factor activity"/>
    <property type="evidence" value="ECO:0007669"/>
    <property type="project" value="InterPro"/>
</dbReference>
<dbReference type="GO" id="GO:0043565">
    <property type="term" value="F:sequence-specific DNA binding"/>
    <property type="evidence" value="ECO:0007669"/>
    <property type="project" value="InterPro"/>
</dbReference>
<dbReference type="GO" id="GO:0009056">
    <property type="term" value="P:catabolic process"/>
    <property type="evidence" value="ECO:0007669"/>
    <property type="project" value="UniProtKB-KW"/>
</dbReference>
<dbReference type="GO" id="GO:0009893">
    <property type="term" value="P:positive regulation of metabolic process"/>
    <property type="evidence" value="ECO:0007669"/>
    <property type="project" value="UniProtKB-ARBA"/>
</dbReference>
<dbReference type="Gene3D" id="1.10.10.60">
    <property type="entry name" value="Homeodomain-like"/>
    <property type="match status" value="1"/>
</dbReference>
<dbReference type="InterPro" id="IPR035418">
    <property type="entry name" value="AraC-bd_2"/>
</dbReference>
<dbReference type="InterPro" id="IPR050204">
    <property type="entry name" value="AraC_XylS_family_regulators"/>
</dbReference>
<dbReference type="InterPro" id="IPR009057">
    <property type="entry name" value="Homeodomain-like_sf"/>
</dbReference>
<dbReference type="InterPro" id="IPR037923">
    <property type="entry name" value="HTH-like"/>
</dbReference>
<dbReference type="InterPro" id="IPR018060">
    <property type="entry name" value="HTH_AraC"/>
</dbReference>
<dbReference type="InterPro" id="IPR018062">
    <property type="entry name" value="HTH_AraC-typ_CS"/>
</dbReference>
<dbReference type="PANTHER" id="PTHR46796:SF6">
    <property type="entry name" value="ARAC SUBFAMILY"/>
    <property type="match status" value="1"/>
</dbReference>
<dbReference type="PANTHER" id="PTHR46796">
    <property type="entry name" value="HTH-TYPE TRANSCRIPTIONAL ACTIVATOR RHAS-RELATED"/>
    <property type="match status" value="1"/>
</dbReference>
<dbReference type="Pfam" id="PF14525">
    <property type="entry name" value="AraC_binding_2"/>
    <property type="match status" value="1"/>
</dbReference>
<dbReference type="Pfam" id="PF12833">
    <property type="entry name" value="HTH_18"/>
    <property type="match status" value="1"/>
</dbReference>
<dbReference type="SMART" id="SM00342">
    <property type="entry name" value="HTH_ARAC"/>
    <property type="match status" value="1"/>
</dbReference>
<dbReference type="SUPFAM" id="SSF46689">
    <property type="entry name" value="Homeodomain-like"/>
    <property type="match status" value="1"/>
</dbReference>
<dbReference type="SUPFAM" id="SSF51215">
    <property type="entry name" value="Regulatory protein AraC"/>
    <property type="match status" value="1"/>
</dbReference>
<dbReference type="PROSITE" id="PS00041">
    <property type="entry name" value="HTH_ARAC_FAMILY_1"/>
    <property type="match status" value="1"/>
</dbReference>
<dbReference type="PROSITE" id="PS01124">
    <property type="entry name" value="HTH_ARAC_FAMILY_2"/>
    <property type="match status" value="1"/>
</dbReference>
<organism>
    <name type="scientific">Pseudomonas putida</name>
    <name type="common">Arthrobacter siderocapsulatus</name>
    <dbReference type="NCBI Taxonomy" id="303"/>
    <lineage>
        <taxon>Bacteria</taxon>
        <taxon>Pseudomonadati</taxon>
        <taxon>Pseudomonadota</taxon>
        <taxon>Gammaproteobacteria</taxon>
        <taxon>Pseudomonadales</taxon>
        <taxon>Pseudomonadaceae</taxon>
        <taxon>Pseudomonas</taxon>
    </lineage>
</organism>
<comment type="function">
    <text>Regulatory protein of the TOL plasmid xyl operons. XylS activates the xylXYZLTEGFJQKIH operon required for the degradation of toluene, m-xylene and p-xylene.</text>
</comment>
<comment type="subcellular location">
    <subcellularLocation>
        <location>Cytoplasm</location>
    </subcellularLocation>
</comment>
<gene>
    <name type="primary">xylS1</name>
</gene>
<protein>
    <recommendedName>
        <fullName>XylDLEGF operon transcriptional activator 1</fullName>
    </recommendedName>
</protein>
<sequence length="321" mass="36582">MDFRLLNEKSQIFVHAEPYAVSDYVNQYVGTHSIRLPKGGRPAGRLHHRIFGGLDLCRISYGGSVRVISPGLETCYHLQIILKGHCLWRDHGQEHYFAPGELLLLNPDDQADLTYSEDCEKFIVKLPSVVLDRACSENNWHKPREGIRFAARHNLQQLDGFINLLGLVCDEAEHTKSMPRVQEHYAGIIASKLLEMLGSNVSREIFSKGNPSFERVVQFIEENLKRNISLERLAELAMMSPRSLYNLFEKHAGTTPKNYIRNRKLESIRACLNDPSANVRSITEIALDYGFLHLGRFAENYRSAFGELPSDTLRQCKKEVA</sequence>
<accession>Q04710</accession>
<reference key="1">
    <citation type="journal article" date="1993" name="J. Gen. Microbiol.">
        <title>A comparison of the multiple alleles of xylS carried by TOL plasmids pWW53 and pDK1 and its implications for their evolutionary relationship.</title>
        <authorList>
            <person name="Assinder S.J."/>
            <person name="de Marco P."/>
            <person name="Osborne D.J."/>
            <person name="Poh C.L."/>
            <person name="Shaw L.E."/>
            <person name="Winson M.K."/>
            <person name="Williams P.A."/>
        </authorList>
    </citation>
    <scope>NUCLEOTIDE SEQUENCE [GENOMIC DNA]</scope>
    <source>
        <strain>MT53</strain>
    </source>
</reference>
<proteinExistence type="predicted"/>